<keyword id="KW-0053">Apoptosis</keyword>
<keyword id="KW-0378">Hydrolase</keyword>
<keyword id="KW-0645">Protease</keyword>
<keyword id="KW-1185">Reference proteome</keyword>
<keyword id="KW-0788">Thiol protease</keyword>
<keyword id="KW-0865">Zymogen</keyword>
<proteinExistence type="inferred from homology"/>
<dbReference type="EC" id="3.4.22.-"/>
<dbReference type="EMBL" id="CR382139">
    <property type="protein sequence ID" value="CAG91018.2"/>
    <property type="molecule type" value="Genomic_DNA"/>
</dbReference>
<dbReference type="RefSeq" id="XP_462508.2">
    <property type="nucleotide sequence ID" value="XM_462508.1"/>
</dbReference>
<dbReference type="SMR" id="Q6BH13"/>
<dbReference type="FunCoup" id="Q6BH13">
    <property type="interactions" value="393"/>
</dbReference>
<dbReference type="STRING" id="284592.Q6BH13"/>
<dbReference type="MEROPS" id="C14.035"/>
<dbReference type="GeneID" id="2905458"/>
<dbReference type="KEGG" id="dha:DEHA2G22176g"/>
<dbReference type="VEuPathDB" id="FungiDB:DEHA2G22176g"/>
<dbReference type="eggNOG" id="KOG1546">
    <property type="taxonomic scope" value="Eukaryota"/>
</dbReference>
<dbReference type="HOGENOM" id="CLU_029389_0_1_1"/>
<dbReference type="InParanoid" id="Q6BH13"/>
<dbReference type="OMA" id="MHRIMVT"/>
<dbReference type="OrthoDB" id="3223806at2759"/>
<dbReference type="Proteomes" id="UP000000599">
    <property type="component" value="Chromosome G"/>
</dbReference>
<dbReference type="GO" id="GO:0005829">
    <property type="term" value="C:cytosol"/>
    <property type="evidence" value="ECO:0007669"/>
    <property type="project" value="EnsemblFungi"/>
</dbReference>
<dbReference type="GO" id="GO:0005634">
    <property type="term" value="C:nucleus"/>
    <property type="evidence" value="ECO:0007669"/>
    <property type="project" value="EnsemblFungi"/>
</dbReference>
<dbReference type="GO" id="GO:0004198">
    <property type="term" value="F:calcium-dependent cysteine-type endopeptidase activity"/>
    <property type="evidence" value="ECO:0007669"/>
    <property type="project" value="EnsemblFungi"/>
</dbReference>
<dbReference type="GO" id="GO:0006915">
    <property type="term" value="P:apoptotic process"/>
    <property type="evidence" value="ECO:0007669"/>
    <property type="project" value="UniProtKB-KW"/>
</dbReference>
<dbReference type="GO" id="GO:0006515">
    <property type="term" value="P:protein quality control for misfolded or incompletely synthesized proteins"/>
    <property type="evidence" value="ECO:0007669"/>
    <property type="project" value="EnsemblFungi"/>
</dbReference>
<dbReference type="Gene3D" id="3.40.50.12660">
    <property type="match status" value="1"/>
</dbReference>
<dbReference type="InterPro" id="IPR029030">
    <property type="entry name" value="Caspase-like_dom_sf"/>
</dbReference>
<dbReference type="InterPro" id="IPR050452">
    <property type="entry name" value="Metacaspase"/>
</dbReference>
<dbReference type="InterPro" id="IPR011600">
    <property type="entry name" value="Pept_C14_caspase"/>
</dbReference>
<dbReference type="PANTHER" id="PTHR48104:SF30">
    <property type="entry name" value="METACASPASE-1"/>
    <property type="match status" value="1"/>
</dbReference>
<dbReference type="PANTHER" id="PTHR48104">
    <property type="entry name" value="METACASPASE-4"/>
    <property type="match status" value="1"/>
</dbReference>
<dbReference type="Pfam" id="PF00656">
    <property type="entry name" value="Peptidase_C14"/>
    <property type="match status" value="1"/>
</dbReference>
<dbReference type="PRINTS" id="PR00239">
    <property type="entry name" value="RHODOPSNTAIL"/>
</dbReference>
<dbReference type="SUPFAM" id="SSF52129">
    <property type="entry name" value="Caspase-like"/>
    <property type="match status" value="1"/>
</dbReference>
<sequence length="440" mass="47809">MFPGSGRKTYRQQAPPPGPPNGYQYGPPPGAQGQYPPPQGYPPQGYPPQGYPPQGYAPQGYPPQGYAPQGYAPQGYQQQGGQQQGGQQQGGQQQGGQRQTYATQEAQNFGQGVGNPHPTGPPPSNPQGFGQNSGMTFQYSNCNGKKKALLVGINYTGSKNQLRGCINDVKNMSNFLNQHFGYSYDDMVILTDDQNQRARIPTKENIIRAMQWLVKDARPNDSLVFHYSGHGGVTKDLVGDEESGMDDVIYPLDFEVNGHIIDDIMHDIMVKPLPQGCRLTALYDSCHSGTALDLPYVYSTKGVVKEPNLLKDAGTGAFNALLSYETGNISGAISSLSGIVKKISNSASTNRDQVIRMKASPADVISISGCKDDQTSADAREGGQSTGAMSWSFITTMNQMPNQSYLSLLNNMRTLLKSKYSQKPQLSCSHPQDMNLKFIM</sequence>
<protein>
    <recommendedName>
        <fullName>Metacaspase-1</fullName>
        <ecNumber>3.4.22.-</ecNumber>
    </recommendedName>
</protein>
<name>MCA1_DEBHA</name>
<evidence type="ECO:0000250" key="1"/>
<evidence type="ECO:0000255" key="2"/>
<evidence type="ECO:0000256" key="3">
    <source>
        <dbReference type="SAM" id="MobiDB-lite"/>
    </source>
</evidence>
<evidence type="ECO:0000305" key="4"/>
<comment type="function">
    <text evidence="1">Involved in cell death (apoptosis).</text>
</comment>
<comment type="similarity">
    <text evidence="4">Belongs to the peptidase C14B family.</text>
</comment>
<organism>
    <name type="scientific">Debaryomyces hansenii (strain ATCC 36239 / CBS 767 / BCRC 21394 / JCM 1990 / NBRC 0083 / IGC 2968)</name>
    <name type="common">Yeast</name>
    <name type="synonym">Torulaspora hansenii</name>
    <dbReference type="NCBI Taxonomy" id="284592"/>
    <lineage>
        <taxon>Eukaryota</taxon>
        <taxon>Fungi</taxon>
        <taxon>Dikarya</taxon>
        <taxon>Ascomycota</taxon>
        <taxon>Saccharomycotina</taxon>
        <taxon>Pichiomycetes</taxon>
        <taxon>Debaryomycetaceae</taxon>
        <taxon>Debaryomyces</taxon>
    </lineage>
</organism>
<feature type="propeptide" id="PRO_0000333646" evidence="2">
    <location>
        <begin position="1"/>
        <end status="unknown"/>
    </location>
</feature>
<feature type="chain" id="PRO_0000333647" description="Metacaspase-1">
    <location>
        <begin status="unknown"/>
        <end position="440"/>
    </location>
</feature>
<feature type="region of interest" description="Disordered" evidence="3">
    <location>
        <begin position="1"/>
        <end position="134"/>
    </location>
</feature>
<feature type="compositionally biased region" description="Pro residues" evidence="3">
    <location>
        <begin position="14"/>
        <end position="51"/>
    </location>
</feature>
<feature type="compositionally biased region" description="Low complexity" evidence="3">
    <location>
        <begin position="52"/>
        <end position="81"/>
    </location>
</feature>
<feature type="compositionally biased region" description="Gly residues" evidence="3">
    <location>
        <begin position="82"/>
        <end position="94"/>
    </location>
</feature>
<feature type="compositionally biased region" description="Polar residues" evidence="3">
    <location>
        <begin position="98"/>
        <end position="110"/>
    </location>
</feature>
<feature type="active site" evidence="1">
    <location>
        <position position="230"/>
    </location>
</feature>
<feature type="active site" evidence="1">
    <location>
        <position position="286"/>
    </location>
</feature>
<accession>Q6BH13</accession>
<reference key="1">
    <citation type="journal article" date="2004" name="Nature">
        <title>Genome evolution in yeasts.</title>
        <authorList>
            <person name="Dujon B."/>
            <person name="Sherman D."/>
            <person name="Fischer G."/>
            <person name="Durrens P."/>
            <person name="Casaregola S."/>
            <person name="Lafontaine I."/>
            <person name="de Montigny J."/>
            <person name="Marck C."/>
            <person name="Neuveglise C."/>
            <person name="Talla E."/>
            <person name="Goffard N."/>
            <person name="Frangeul L."/>
            <person name="Aigle M."/>
            <person name="Anthouard V."/>
            <person name="Babour A."/>
            <person name="Barbe V."/>
            <person name="Barnay S."/>
            <person name="Blanchin S."/>
            <person name="Beckerich J.-M."/>
            <person name="Beyne E."/>
            <person name="Bleykasten C."/>
            <person name="Boisrame A."/>
            <person name="Boyer J."/>
            <person name="Cattolico L."/>
            <person name="Confanioleri F."/>
            <person name="de Daruvar A."/>
            <person name="Despons L."/>
            <person name="Fabre E."/>
            <person name="Fairhead C."/>
            <person name="Ferry-Dumazet H."/>
            <person name="Groppi A."/>
            <person name="Hantraye F."/>
            <person name="Hennequin C."/>
            <person name="Jauniaux N."/>
            <person name="Joyet P."/>
            <person name="Kachouri R."/>
            <person name="Kerrest A."/>
            <person name="Koszul R."/>
            <person name="Lemaire M."/>
            <person name="Lesur I."/>
            <person name="Ma L."/>
            <person name="Muller H."/>
            <person name="Nicaud J.-M."/>
            <person name="Nikolski M."/>
            <person name="Oztas S."/>
            <person name="Ozier-Kalogeropoulos O."/>
            <person name="Pellenz S."/>
            <person name="Potier S."/>
            <person name="Richard G.-F."/>
            <person name="Straub M.-L."/>
            <person name="Suleau A."/>
            <person name="Swennen D."/>
            <person name="Tekaia F."/>
            <person name="Wesolowski-Louvel M."/>
            <person name="Westhof E."/>
            <person name="Wirth B."/>
            <person name="Zeniou-Meyer M."/>
            <person name="Zivanovic Y."/>
            <person name="Bolotin-Fukuhara M."/>
            <person name="Thierry A."/>
            <person name="Bouchier C."/>
            <person name="Caudron B."/>
            <person name="Scarpelli C."/>
            <person name="Gaillardin C."/>
            <person name="Weissenbach J."/>
            <person name="Wincker P."/>
            <person name="Souciet J.-L."/>
        </authorList>
    </citation>
    <scope>NUCLEOTIDE SEQUENCE [LARGE SCALE GENOMIC DNA]</scope>
    <source>
        <strain>ATCC 36239 / CBS 767 / BCRC 21394 / JCM 1990 / NBRC 0083 / IGC 2968</strain>
    </source>
</reference>
<gene>
    <name type="primary">MCA1</name>
    <name type="ordered locus">DEHA2G22176g</name>
</gene>